<name>ENO_PSEAB</name>
<proteinExistence type="evidence at protein level"/>
<reference key="1">
    <citation type="journal article" date="2006" name="Genome Biol.">
        <title>Genomic analysis reveals that Pseudomonas aeruginosa virulence is combinatorial.</title>
        <authorList>
            <person name="Lee D.G."/>
            <person name="Urbach J.M."/>
            <person name="Wu G."/>
            <person name="Liberati N.T."/>
            <person name="Feinbaum R.L."/>
            <person name="Miyata S."/>
            <person name="Diggins L.T."/>
            <person name="He J."/>
            <person name="Saucier M."/>
            <person name="Deziel E."/>
            <person name="Friedman L."/>
            <person name="Li L."/>
            <person name="Grills G."/>
            <person name="Montgomery K."/>
            <person name="Kucherlapati R."/>
            <person name="Rahme L.G."/>
            <person name="Ausubel F.M."/>
        </authorList>
    </citation>
    <scope>NUCLEOTIDE SEQUENCE [LARGE SCALE GENOMIC DNA]</scope>
    <source>
        <strain>UCBPP-PA14</strain>
    </source>
</reference>
<reference key="2">
    <citation type="journal article" date="2014" name="Anal. Bioanal. Chem.">
        <title>Potential of liquid-isoelectric-focusing protein fractionation to improve phosphoprotein characterization of Pseudomonas aeruginosa PA14.</title>
        <authorList>
            <person name="Ouidir T."/>
            <person name="Jarnier F."/>
            <person name="Cosette P."/>
            <person name="Jouenne T."/>
            <person name="Hardouin J."/>
        </authorList>
    </citation>
    <scope>IDENTIFICATION BY MASS SPECTROMETRY</scope>
    <source>
        <strain>UCBPP-PA14</strain>
    </source>
</reference>
<protein>
    <recommendedName>
        <fullName evidence="1">Enolase</fullName>
        <ecNumber evidence="1">4.2.1.11</ecNumber>
    </recommendedName>
    <alternativeName>
        <fullName evidence="1">2-phospho-D-glycerate hydro-lyase</fullName>
    </alternativeName>
    <alternativeName>
        <fullName evidence="1">2-phosphoglycerate dehydratase</fullName>
    </alternativeName>
</protein>
<sequence>MAKIVDIKGREVLDSRGNPTVEADVILDNGIVGSACAPSGASTGSREALELRDGDKSRYLGKGVLKAVANINGPIRDLLLGKDAADQKALDHAMIELDGTENKAKLGANAILAVSLAAAKAAAQAKGVPLYAHIADLNGTPGQYSMPVPMMNIINGGEHADNNVDIQEFMVQPVGAKNFAEALRMGAEIFHHLKAVLKARGLNTAVGDEGGFAPNLSSNEDALAAIAEAVEKAGYKLGDDVTLALDCASSEFFKDGKYDLEGEGKVFDAAGFADYLAGLTQRYPIISIEDGMDESDWAGWKGLTDKIGAKVQLVGDDLFVTNTKILKEGIEKGIGNSILIKFNQIGSLTETLEAIQMAKAAGYTAVISHRSGETEDSTIADLAVGTAAGQIKTGSLCRSDRVSKYNQLLRIEEQLGAKAPYRGRAEFRG</sequence>
<dbReference type="EC" id="4.2.1.11" evidence="1"/>
<dbReference type="EMBL" id="CP000438">
    <property type="protein sequence ID" value="ABJ12868.1"/>
    <property type="molecule type" value="Genomic_DNA"/>
</dbReference>
<dbReference type="RefSeq" id="WP_003092364.1">
    <property type="nucleotide sequence ID" value="NZ_CP034244.1"/>
</dbReference>
<dbReference type="SMR" id="Q02RA7"/>
<dbReference type="KEGG" id="pau:PA14_17320"/>
<dbReference type="PseudoCAP" id="PA14_17320"/>
<dbReference type="HOGENOM" id="CLU_031223_2_1_6"/>
<dbReference type="BioCyc" id="PAER208963:G1G74-1426-MONOMER"/>
<dbReference type="UniPathway" id="UPA00109">
    <property type="reaction ID" value="UER00187"/>
</dbReference>
<dbReference type="Proteomes" id="UP000000653">
    <property type="component" value="Chromosome"/>
</dbReference>
<dbReference type="GO" id="GO:0009986">
    <property type="term" value="C:cell surface"/>
    <property type="evidence" value="ECO:0007669"/>
    <property type="project" value="UniProtKB-SubCell"/>
</dbReference>
<dbReference type="GO" id="GO:0005576">
    <property type="term" value="C:extracellular region"/>
    <property type="evidence" value="ECO:0007669"/>
    <property type="project" value="UniProtKB-SubCell"/>
</dbReference>
<dbReference type="GO" id="GO:0000015">
    <property type="term" value="C:phosphopyruvate hydratase complex"/>
    <property type="evidence" value="ECO:0007669"/>
    <property type="project" value="InterPro"/>
</dbReference>
<dbReference type="GO" id="GO:0000287">
    <property type="term" value="F:magnesium ion binding"/>
    <property type="evidence" value="ECO:0007669"/>
    <property type="project" value="UniProtKB-UniRule"/>
</dbReference>
<dbReference type="GO" id="GO:0004634">
    <property type="term" value="F:phosphopyruvate hydratase activity"/>
    <property type="evidence" value="ECO:0007669"/>
    <property type="project" value="UniProtKB-UniRule"/>
</dbReference>
<dbReference type="GO" id="GO:0006096">
    <property type="term" value="P:glycolytic process"/>
    <property type="evidence" value="ECO:0007669"/>
    <property type="project" value="UniProtKB-UniRule"/>
</dbReference>
<dbReference type="CDD" id="cd03313">
    <property type="entry name" value="enolase"/>
    <property type="match status" value="1"/>
</dbReference>
<dbReference type="FunFam" id="3.20.20.120:FF:000001">
    <property type="entry name" value="Enolase"/>
    <property type="match status" value="1"/>
</dbReference>
<dbReference type="FunFam" id="3.30.390.10:FF:000001">
    <property type="entry name" value="Enolase"/>
    <property type="match status" value="1"/>
</dbReference>
<dbReference type="Gene3D" id="3.20.20.120">
    <property type="entry name" value="Enolase-like C-terminal domain"/>
    <property type="match status" value="1"/>
</dbReference>
<dbReference type="Gene3D" id="3.30.390.10">
    <property type="entry name" value="Enolase-like, N-terminal domain"/>
    <property type="match status" value="1"/>
</dbReference>
<dbReference type="HAMAP" id="MF_00318">
    <property type="entry name" value="Enolase"/>
    <property type="match status" value="1"/>
</dbReference>
<dbReference type="InterPro" id="IPR000941">
    <property type="entry name" value="Enolase"/>
</dbReference>
<dbReference type="InterPro" id="IPR036849">
    <property type="entry name" value="Enolase-like_C_sf"/>
</dbReference>
<dbReference type="InterPro" id="IPR029017">
    <property type="entry name" value="Enolase-like_N"/>
</dbReference>
<dbReference type="InterPro" id="IPR020810">
    <property type="entry name" value="Enolase_C"/>
</dbReference>
<dbReference type="InterPro" id="IPR020809">
    <property type="entry name" value="Enolase_CS"/>
</dbReference>
<dbReference type="InterPro" id="IPR020811">
    <property type="entry name" value="Enolase_N"/>
</dbReference>
<dbReference type="NCBIfam" id="TIGR01060">
    <property type="entry name" value="eno"/>
    <property type="match status" value="1"/>
</dbReference>
<dbReference type="PANTHER" id="PTHR11902">
    <property type="entry name" value="ENOLASE"/>
    <property type="match status" value="1"/>
</dbReference>
<dbReference type="PANTHER" id="PTHR11902:SF1">
    <property type="entry name" value="ENOLASE"/>
    <property type="match status" value="1"/>
</dbReference>
<dbReference type="Pfam" id="PF00113">
    <property type="entry name" value="Enolase_C"/>
    <property type="match status" value="1"/>
</dbReference>
<dbReference type="Pfam" id="PF03952">
    <property type="entry name" value="Enolase_N"/>
    <property type="match status" value="1"/>
</dbReference>
<dbReference type="PIRSF" id="PIRSF001400">
    <property type="entry name" value="Enolase"/>
    <property type="match status" value="1"/>
</dbReference>
<dbReference type="PRINTS" id="PR00148">
    <property type="entry name" value="ENOLASE"/>
</dbReference>
<dbReference type="SFLD" id="SFLDS00001">
    <property type="entry name" value="Enolase"/>
    <property type="match status" value="1"/>
</dbReference>
<dbReference type="SFLD" id="SFLDF00002">
    <property type="entry name" value="enolase"/>
    <property type="match status" value="1"/>
</dbReference>
<dbReference type="SMART" id="SM01192">
    <property type="entry name" value="Enolase_C"/>
    <property type="match status" value="1"/>
</dbReference>
<dbReference type="SMART" id="SM01193">
    <property type="entry name" value="Enolase_N"/>
    <property type="match status" value="1"/>
</dbReference>
<dbReference type="SUPFAM" id="SSF51604">
    <property type="entry name" value="Enolase C-terminal domain-like"/>
    <property type="match status" value="1"/>
</dbReference>
<dbReference type="SUPFAM" id="SSF54826">
    <property type="entry name" value="Enolase N-terminal domain-like"/>
    <property type="match status" value="1"/>
</dbReference>
<dbReference type="PROSITE" id="PS00164">
    <property type="entry name" value="ENOLASE"/>
    <property type="match status" value="1"/>
</dbReference>
<gene>
    <name evidence="1" type="primary">eno</name>
    <name type="ordered locus">PA14_17320</name>
</gene>
<accession>Q02RA7</accession>
<comment type="function">
    <text evidence="1">Catalyzes the reversible conversion of 2-phosphoglycerate (2-PG) into phosphoenolpyruvate (PEP). It is essential for the degradation of carbohydrates via glycolysis.</text>
</comment>
<comment type="catalytic activity">
    <reaction evidence="1">
        <text>(2R)-2-phosphoglycerate = phosphoenolpyruvate + H2O</text>
        <dbReference type="Rhea" id="RHEA:10164"/>
        <dbReference type="ChEBI" id="CHEBI:15377"/>
        <dbReference type="ChEBI" id="CHEBI:58289"/>
        <dbReference type="ChEBI" id="CHEBI:58702"/>
        <dbReference type="EC" id="4.2.1.11"/>
    </reaction>
</comment>
<comment type="cofactor">
    <cofactor evidence="1">
        <name>Mg(2+)</name>
        <dbReference type="ChEBI" id="CHEBI:18420"/>
    </cofactor>
    <text evidence="1">Binds a second Mg(2+) ion via substrate during catalysis.</text>
</comment>
<comment type="pathway">
    <text evidence="1">Carbohydrate degradation; glycolysis; pyruvate from D-glyceraldehyde 3-phosphate: step 4/5.</text>
</comment>
<comment type="subunit">
    <text evidence="1">Component of the RNA degradosome, a multiprotein complex involved in RNA processing and mRNA degradation.</text>
</comment>
<comment type="subcellular location">
    <subcellularLocation>
        <location evidence="1">Cytoplasm</location>
    </subcellularLocation>
    <subcellularLocation>
        <location evidence="1">Secreted</location>
    </subcellularLocation>
    <subcellularLocation>
        <location evidence="1">Cell surface</location>
    </subcellularLocation>
    <text evidence="1">Fractions of enolase are present in both the cytoplasm and on the cell surface.</text>
</comment>
<comment type="similarity">
    <text evidence="1">Belongs to the enolase family.</text>
</comment>
<evidence type="ECO:0000255" key="1">
    <source>
        <dbReference type="HAMAP-Rule" id="MF_00318"/>
    </source>
</evidence>
<keyword id="KW-0963">Cytoplasm</keyword>
<keyword id="KW-0324">Glycolysis</keyword>
<keyword id="KW-0456">Lyase</keyword>
<keyword id="KW-0460">Magnesium</keyword>
<keyword id="KW-0479">Metal-binding</keyword>
<keyword id="KW-0964">Secreted</keyword>
<organism>
    <name type="scientific">Pseudomonas aeruginosa (strain UCBPP-PA14)</name>
    <dbReference type="NCBI Taxonomy" id="208963"/>
    <lineage>
        <taxon>Bacteria</taxon>
        <taxon>Pseudomonadati</taxon>
        <taxon>Pseudomonadota</taxon>
        <taxon>Gammaproteobacteria</taxon>
        <taxon>Pseudomonadales</taxon>
        <taxon>Pseudomonadaceae</taxon>
        <taxon>Pseudomonas</taxon>
    </lineage>
</organism>
<feature type="chain" id="PRO_0000280871" description="Enolase">
    <location>
        <begin position="1"/>
        <end position="429"/>
    </location>
</feature>
<feature type="active site" description="Proton donor" evidence="1">
    <location>
        <position position="209"/>
    </location>
</feature>
<feature type="active site" description="Proton acceptor" evidence="1">
    <location>
        <position position="341"/>
    </location>
</feature>
<feature type="binding site" evidence="1">
    <location>
        <position position="167"/>
    </location>
    <ligand>
        <name>(2R)-2-phosphoglycerate</name>
        <dbReference type="ChEBI" id="CHEBI:58289"/>
    </ligand>
</feature>
<feature type="binding site" evidence="1">
    <location>
        <position position="246"/>
    </location>
    <ligand>
        <name>Mg(2+)</name>
        <dbReference type="ChEBI" id="CHEBI:18420"/>
    </ligand>
</feature>
<feature type="binding site" evidence="1">
    <location>
        <position position="289"/>
    </location>
    <ligand>
        <name>Mg(2+)</name>
        <dbReference type="ChEBI" id="CHEBI:18420"/>
    </ligand>
</feature>
<feature type="binding site" evidence="1">
    <location>
        <position position="316"/>
    </location>
    <ligand>
        <name>Mg(2+)</name>
        <dbReference type="ChEBI" id="CHEBI:18420"/>
    </ligand>
</feature>
<feature type="binding site" evidence="1">
    <location>
        <position position="341"/>
    </location>
    <ligand>
        <name>(2R)-2-phosphoglycerate</name>
        <dbReference type="ChEBI" id="CHEBI:58289"/>
    </ligand>
</feature>
<feature type="binding site" evidence="1">
    <location>
        <position position="370"/>
    </location>
    <ligand>
        <name>(2R)-2-phosphoglycerate</name>
        <dbReference type="ChEBI" id="CHEBI:58289"/>
    </ligand>
</feature>
<feature type="binding site" evidence="1">
    <location>
        <position position="371"/>
    </location>
    <ligand>
        <name>(2R)-2-phosphoglycerate</name>
        <dbReference type="ChEBI" id="CHEBI:58289"/>
    </ligand>
</feature>
<feature type="binding site" evidence="1">
    <location>
        <position position="392"/>
    </location>
    <ligand>
        <name>(2R)-2-phosphoglycerate</name>
        <dbReference type="ChEBI" id="CHEBI:58289"/>
    </ligand>
</feature>